<reference key="1">
    <citation type="journal article" date="1997" name="J. Gen. Virol.">
        <title>Complete DNA sequence of canine adenovirus type 1.</title>
        <authorList>
            <person name="Morrison M.D."/>
            <person name="Onions D.E."/>
            <person name="Nicolson L."/>
        </authorList>
    </citation>
    <scope>NUCLEOTIDE SEQUENCE [LARGE SCALE GENOMIC DNA]</scope>
</reference>
<protein>
    <recommendedName>
        <fullName evidence="1">Core-capsid bridging protein</fullName>
    </recommendedName>
    <alternativeName>
        <fullName evidence="1">Core protein V</fullName>
    </alternativeName>
</protein>
<proteinExistence type="inferred from homology"/>
<comment type="function">
    <text evidence="1">Associates loosely with the viral DNA to form an outer shell around the nucleoprotein-DNA complex and links it with the capsid by binding the endosome lysis protein. Dissociates from the viral genome during entry. Might be involved in nuclear capsid assembly of the viral particles through its association with NPM1/nucleophosmin.</text>
</comment>
<comment type="subunit">
    <text evidence="1">Monomer. Homodimer. Exists in equilibrium between monomers and dimers in solution. Interacts with the histone-like nucleoprotein; this interactions bridge the virus core to the capsid. Interacts with core protein X; this interactions bridge the virus core to the capsid. Interacts with the endosome lysis protein VI; this interactions bridge the virus core to the capsid. Interacts with the peripentonal hexons. Interacts with host NPM1; this interaction might play a role in virus assembly.</text>
</comment>
<comment type="subcellular location">
    <subcellularLocation>
        <location evidence="1">Virion</location>
    </subcellularLocation>
    <subcellularLocation>
        <location evidence="1">Host nucleus</location>
        <location evidence="1">Host nucleolus</location>
    </subcellularLocation>
    <text evidence="1">Located inside the capsid (core). Present in 157 copies per virion. Localizes in the nucleoli during infection, then translocates from the nucleoli to the nucleoplasm as the infection progresses and is finally incorporated into the viral particles.</text>
</comment>
<comment type="induction">
    <text evidence="1">Expressed in the late phase of the viral replicative cycle.</text>
</comment>
<comment type="miscellaneous">
    <text evidence="1">All late proteins expressed from the major late promoter are produced by alternative splicing and alternative polyadenylation of the same gene giving rise to non-overlapping ORFs. A leader sequence is present in the N-terminus of all these mRNAs and is recognized by the viral shutoff protein to provide expression although conventional translation via ribosome scanning from the cap has been shut off in the host cell.</text>
</comment>
<comment type="miscellaneous">
    <text evidence="1">This protein is only encoded by mastadenoviruses, and may therefore play a role in mammals tropism.</text>
</comment>
<comment type="similarity">
    <text evidence="1 2">Belongs to the adenoviridae core-capsid bridging protein family.</text>
</comment>
<accession>Q96685</accession>
<dbReference type="EMBL" id="Y07760">
    <property type="protein sequence ID" value="CAA69063.1"/>
    <property type="molecule type" value="Genomic_DNA"/>
</dbReference>
<dbReference type="RefSeq" id="AP_000056.1">
    <property type="nucleotide sequence ID" value="AC_000003.1"/>
</dbReference>
<dbReference type="KEGG" id="vg:1488928"/>
<dbReference type="Proteomes" id="UP000126130">
    <property type="component" value="Segment"/>
</dbReference>
<dbReference type="GO" id="GO:0044196">
    <property type="term" value="C:host cell nucleolus"/>
    <property type="evidence" value="ECO:0007669"/>
    <property type="project" value="UniProtKB-SubCell"/>
</dbReference>
<dbReference type="GO" id="GO:0044423">
    <property type="term" value="C:virion component"/>
    <property type="evidence" value="ECO:0007669"/>
    <property type="project" value="UniProtKB-UniRule"/>
</dbReference>
<dbReference type="GO" id="GO:0003677">
    <property type="term" value="F:DNA binding"/>
    <property type="evidence" value="ECO:0007669"/>
    <property type="project" value="UniProtKB-UniRule"/>
</dbReference>
<dbReference type="GO" id="GO:0019076">
    <property type="term" value="P:viral release from host cell"/>
    <property type="evidence" value="ECO:0007669"/>
    <property type="project" value="UniProtKB-UniRule"/>
</dbReference>
<dbReference type="HAMAP" id="MF_04053">
    <property type="entry name" value="ADV_CORE5"/>
    <property type="match status" value="1"/>
</dbReference>
<dbReference type="InterPro" id="IPR005608">
    <property type="entry name" value="Adeno_V"/>
</dbReference>
<dbReference type="Pfam" id="PF03910">
    <property type="entry name" value="Adeno_PV"/>
    <property type="match status" value="2"/>
</dbReference>
<gene>
    <name evidence="1" type="primary">L2</name>
</gene>
<name>CORE5_ADECR</name>
<organism>
    <name type="scientific">Canine adenovirus serotype 1 (strain RI261)</name>
    <name type="common">CAdV-1</name>
    <name type="synonym">Canine adenovirus 1 (strain RI261)</name>
    <dbReference type="NCBI Taxonomy" id="69151"/>
    <lineage>
        <taxon>Viruses</taxon>
        <taxon>Varidnaviria</taxon>
        <taxon>Bamfordvirae</taxon>
        <taxon>Preplasmiviricota</taxon>
        <taxon>Tectiliviricetes</taxon>
        <taxon>Rowavirales</taxon>
        <taxon>Adenoviridae</taxon>
        <taxon>Mastadenovirus</taxon>
        <taxon>Canine mastadenovirus A</taxon>
    </lineage>
</organism>
<sequence length="421" mass="47649">MAAISRAIKQELLEDLKPEMYLPPKSTRRRAKVKTEEKVDVKTLVKSKSKKRRAAKNELEENVEFVRRFAPRRPYQWRGRQVRALPRPGIPVVFTPGQRSGVASKRSYDEVYADEDVLDQSGNMINEFAYGKRVKMLTHKNPTPSQVPITPQEPIARPGEARLLPTVQVLAPRDSKHETMLPVTKSEGGDVKVENKGFEQITPQLGVQTVDIKVPVKRKSEVEDEILKRAKMEPFETTVKMEYSEQPQVEVFDTGVEPSSFFEVRSQARPIAVARKRRVPTVEVMEVQQSDHTAPTASAAPVANVIVGPHLSRRPSRWGPANAIYPDYVYHPSISAKKIMGPRPTGRVSRWGPANSIFPEVRLHPSMVSAVTRAAPRKSTKSRRRRRVRTRRAFVLPAGTKTGVMLPQNIRYHPSILFRRA</sequence>
<keyword id="KW-0238">DNA-binding</keyword>
<keyword id="KW-1048">Host nucleus</keyword>
<keyword id="KW-0426">Late protein</keyword>
<keyword id="KW-0118">Viral capsid assembly</keyword>
<keyword id="KW-1188">Viral release from host cell</keyword>
<keyword id="KW-0946">Virion</keyword>
<feature type="chain" id="PRO_0000221909" description="Core-capsid bridging protein">
    <location>
        <begin position="1"/>
        <end position="421"/>
    </location>
</feature>
<organismHost>
    <name type="scientific">Canis lupus familiaris</name>
    <name type="common">Dog</name>
    <name type="synonym">Canis familiaris</name>
    <dbReference type="NCBI Taxonomy" id="9615"/>
</organismHost>
<evidence type="ECO:0000255" key="1">
    <source>
        <dbReference type="HAMAP-Rule" id="MF_04053"/>
    </source>
</evidence>
<evidence type="ECO:0000305" key="2"/>